<gene>
    <name type="primary">galA</name>
</gene>
<name>GANA_ASPNG</name>
<accession>Q8X168</accession>
<evidence type="ECO:0000250" key="1"/>
<evidence type="ECO:0000255" key="2"/>
<evidence type="ECO:0000269" key="3">
    <source>
    </source>
</evidence>
<evidence type="ECO:0000305" key="4"/>
<comment type="function">
    <text evidence="1 3">Endogalactanase involved in the degradation of plant cell wall polysaccharides, and more particularly of hairy regions of pectin.</text>
</comment>
<comment type="catalytic activity">
    <reaction>
        <text>The enzyme specifically hydrolyzes (1-&gt;4)-beta-D-galactosidic linkages in type I arabinogalactans.</text>
        <dbReference type="EC" id="3.2.1.89"/>
    </reaction>
</comment>
<comment type="biophysicochemical properties">
    <phDependence>
        <text evidence="3">Optimum pH is between 4.0 and 4.5.</text>
    </phDependence>
</comment>
<comment type="subcellular location">
    <subcellularLocation>
        <location evidence="3">Secreted</location>
    </subcellularLocation>
</comment>
<comment type="induction">
    <text evidence="3">Specifically expressed on arabinose and galacturonic acid.</text>
</comment>
<comment type="similarity">
    <text evidence="4">Belongs to the glycosyl hydrolase 53 family.</text>
</comment>
<reference key="1">
    <citation type="journal article" date="2002" name="Eur. J. Biochem.">
        <title>Endogalactanase A from Aspergillus niger is specifically induced on L-arabinose and galacturonic acid and plays an important role in the degradation of pectic hairy regions.</title>
        <authorList>
            <person name="de Vries R.P."/>
            <person name="Paenicova L."/>
            <person name="Hinz S."/>
            <person name="Kester H.C.M."/>
            <person name="Benen J.A.E."/>
            <person name="Beldman G.A."/>
            <person name="Visser J."/>
        </authorList>
    </citation>
    <scope>NUCLEOTIDE SEQUENCE [GENOMIC DNA]</scope>
    <scope>INDUCTION</scope>
    <scope>SUBCELLULAR LOCATION</scope>
    <scope>FUNCTION</scope>
    <scope>BIOPHYSICOCHEMICAL PROPERTIES</scope>
    <source>
        <strain>ATCC 9029 / NRRL 3 / CBS 120.49 / DSM 2466 / N400 / FGSC 732</strain>
    </source>
</reference>
<protein>
    <recommendedName>
        <fullName>Arabinogalactan endo-beta-1,4-galactanase A</fullName>
        <ecNumber>3.2.1.89</ecNumber>
    </recommendedName>
    <alternativeName>
        <fullName>Endo-1,4-beta-galactanase A</fullName>
        <shortName>Galactanase A</shortName>
    </alternativeName>
</protein>
<sequence>MIYPLLLSALPLLSSAALTYRGADISSLLIEEDAGISYKNLNGETQALEDILVNNGVNSIRQRVWVDPSDGSYDLDYNLKLAKRVQAAGMSIYLDLHLSDTWADPSDQTTPTGWSTTDIDTLTWQLYNYTLDVCNTFAENDIDIEIVSIGNEISSGLLWPLGKTSNYDNIAKLLHSGAWGVKDSNQATTPKIMIHLDNGWDWEEQEYFYKTVLATGSLLSTDFDLMGVSYYPFYNSEATLSALQTSLTNMQSNYDKSVVVVETNWPVSCPDPEYSFPSDLSSIPFSAAGQEEFLEKLAEVVEGVTDGLGIYYWEPAWVDNAALGSSCADNLMVDIDTDEVLESVTVFEDL</sequence>
<proteinExistence type="evidence at protein level"/>
<feature type="signal peptide" evidence="2">
    <location>
        <begin position="1"/>
        <end position="16"/>
    </location>
</feature>
<feature type="chain" id="PRO_0000394947" description="Arabinogalactan endo-beta-1,4-galactanase A">
    <location>
        <begin position="17"/>
        <end position="350"/>
    </location>
</feature>
<feature type="active site" description="Proton donor" evidence="1">
    <location>
        <position position="152"/>
    </location>
</feature>
<feature type="active site" description="Nucleophile" evidence="1">
    <location>
        <position position="262"/>
    </location>
</feature>
<feature type="glycosylation site" description="N-linked (GlcNAc...) asparagine" evidence="2">
    <location>
        <position position="128"/>
    </location>
</feature>
<organism>
    <name type="scientific">Aspergillus niger</name>
    <dbReference type="NCBI Taxonomy" id="5061"/>
    <lineage>
        <taxon>Eukaryota</taxon>
        <taxon>Fungi</taxon>
        <taxon>Dikarya</taxon>
        <taxon>Ascomycota</taxon>
        <taxon>Pezizomycotina</taxon>
        <taxon>Eurotiomycetes</taxon>
        <taxon>Eurotiomycetidae</taxon>
        <taxon>Eurotiales</taxon>
        <taxon>Aspergillaceae</taxon>
        <taxon>Aspergillus</taxon>
        <taxon>Aspergillus subgen. Circumdati</taxon>
    </lineage>
</organism>
<keyword id="KW-0119">Carbohydrate metabolism</keyword>
<keyword id="KW-0961">Cell wall biogenesis/degradation</keyword>
<keyword id="KW-0325">Glycoprotein</keyword>
<keyword id="KW-0326">Glycosidase</keyword>
<keyword id="KW-0378">Hydrolase</keyword>
<keyword id="KW-0624">Polysaccharide degradation</keyword>
<keyword id="KW-0964">Secreted</keyword>
<keyword id="KW-0732">Signal</keyword>
<dbReference type="EC" id="3.2.1.89"/>
<dbReference type="EMBL" id="AJ305303">
    <property type="protein sequence ID" value="CAC83735.1"/>
    <property type="molecule type" value="Genomic_DNA"/>
</dbReference>
<dbReference type="SMR" id="Q8X168"/>
<dbReference type="CAZy" id="GH53">
    <property type="family name" value="Glycoside Hydrolase Family 53"/>
</dbReference>
<dbReference type="GlyCosmos" id="Q8X168">
    <property type="glycosylation" value="1 site, No reported glycans"/>
</dbReference>
<dbReference type="PaxDb" id="5061-CADANGAP00013963"/>
<dbReference type="VEuPathDB" id="FungiDB:An18g05940"/>
<dbReference type="VEuPathDB" id="FungiDB:ASPNIDRAFT2_1147681"/>
<dbReference type="VEuPathDB" id="FungiDB:ATCC64974_107090"/>
<dbReference type="VEuPathDB" id="FungiDB:M747DRAFT_312025"/>
<dbReference type="eggNOG" id="ENOG502QU6R">
    <property type="taxonomic scope" value="Eukaryota"/>
</dbReference>
<dbReference type="GO" id="GO:0005576">
    <property type="term" value="C:extracellular region"/>
    <property type="evidence" value="ECO:0000314"/>
    <property type="project" value="UniProtKB"/>
</dbReference>
<dbReference type="GO" id="GO:0031218">
    <property type="term" value="F:arabinogalactan endo-1,4-beta-galactosidase activity"/>
    <property type="evidence" value="ECO:0000314"/>
    <property type="project" value="UniProtKB"/>
</dbReference>
<dbReference type="GO" id="GO:0015926">
    <property type="term" value="F:glucosidase activity"/>
    <property type="evidence" value="ECO:0007669"/>
    <property type="project" value="InterPro"/>
</dbReference>
<dbReference type="GO" id="GO:0071555">
    <property type="term" value="P:cell wall organization"/>
    <property type="evidence" value="ECO:0007669"/>
    <property type="project" value="UniProtKB-KW"/>
</dbReference>
<dbReference type="GO" id="GO:0045490">
    <property type="term" value="P:pectin catabolic process"/>
    <property type="evidence" value="ECO:0000314"/>
    <property type="project" value="UniProtKB"/>
</dbReference>
<dbReference type="FunFam" id="3.20.20.80:FF:000077">
    <property type="entry name" value="Arabinogalactan endo-beta-1,4-galactanase"/>
    <property type="match status" value="1"/>
</dbReference>
<dbReference type="Gene3D" id="3.20.20.80">
    <property type="entry name" value="Glycosidases"/>
    <property type="match status" value="1"/>
</dbReference>
<dbReference type="InterPro" id="IPR011683">
    <property type="entry name" value="Glyco_hydro_53"/>
</dbReference>
<dbReference type="InterPro" id="IPR017853">
    <property type="entry name" value="Glycoside_hydrolase_SF"/>
</dbReference>
<dbReference type="PANTHER" id="PTHR34983">
    <property type="entry name" value="ARABINOGALACTAN ENDO-BETA-1,4-GALACTANASE A"/>
    <property type="match status" value="1"/>
</dbReference>
<dbReference type="PANTHER" id="PTHR34983:SF1">
    <property type="entry name" value="ARABINOGALACTAN ENDO-BETA-1,4-GALACTANASE A"/>
    <property type="match status" value="1"/>
</dbReference>
<dbReference type="Pfam" id="PF07745">
    <property type="entry name" value="Glyco_hydro_53"/>
    <property type="match status" value="1"/>
</dbReference>
<dbReference type="SUPFAM" id="SSF51445">
    <property type="entry name" value="(Trans)glycosidases"/>
    <property type="match status" value="1"/>
</dbReference>